<protein>
    <recommendedName>
        <fullName>Triosephosphate isomerase</fullName>
        <shortName>TIM</shortName>
        <ecNumber>5.3.1.1</ecNumber>
    </recommendedName>
    <alternativeName>
        <fullName>Triose-phosphate isomerase</fullName>
    </alternativeName>
</protein>
<proteinExistence type="evidence at protein level"/>
<dbReference type="EC" id="5.3.1.1"/>
<dbReference type="EMBL" id="L07390">
    <property type="protein sequence ID" value="AAA73976.1"/>
    <property type="molecule type" value="Genomic_DNA"/>
</dbReference>
<dbReference type="PIR" id="S29716">
    <property type="entry name" value="S29716"/>
</dbReference>
<dbReference type="SMR" id="P30741"/>
<dbReference type="UniPathway" id="UPA00109">
    <property type="reaction ID" value="UER00189"/>
</dbReference>
<dbReference type="UniPathway" id="UPA00138"/>
<dbReference type="GO" id="GO:0005829">
    <property type="term" value="C:cytosol"/>
    <property type="evidence" value="ECO:0007669"/>
    <property type="project" value="TreeGrafter"/>
</dbReference>
<dbReference type="GO" id="GO:0004807">
    <property type="term" value="F:triose-phosphate isomerase activity"/>
    <property type="evidence" value="ECO:0007669"/>
    <property type="project" value="UniProtKB-EC"/>
</dbReference>
<dbReference type="GO" id="GO:0006094">
    <property type="term" value="P:gluconeogenesis"/>
    <property type="evidence" value="ECO:0007669"/>
    <property type="project" value="UniProtKB-UniPathway"/>
</dbReference>
<dbReference type="GO" id="GO:0046166">
    <property type="term" value="P:glyceraldehyde-3-phosphate biosynthetic process"/>
    <property type="evidence" value="ECO:0007669"/>
    <property type="project" value="TreeGrafter"/>
</dbReference>
<dbReference type="GO" id="GO:0019563">
    <property type="term" value="P:glycerol catabolic process"/>
    <property type="evidence" value="ECO:0007669"/>
    <property type="project" value="TreeGrafter"/>
</dbReference>
<dbReference type="GO" id="GO:0006096">
    <property type="term" value="P:glycolytic process"/>
    <property type="evidence" value="ECO:0007669"/>
    <property type="project" value="UniProtKB-UniPathway"/>
</dbReference>
<dbReference type="CDD" id="cd00311">
    <property type="entry name" value="TIM"/>
    <property type="match status" value="1"/>
</dbReference>
<dbReference type="FunFam" id="3.20.20.70:FF:000025">
    <property type="entry name" value="Triosephosphate isomerase"/>
    <property type="match status" value="1"/>
</dbReference>
<dbReference type="Gene3D" id="3.20.20.70">
    <property type="entry name" value="Aldolase class I"/>
    <property type="match status" value="1"/>
</dbReference>
<dbReference type="HAMAP" id="MF_00147_B">
    <property type="entry name" value="TIM_B"/>
    <property type="match status" value="1"/>
</dbReference>
<dbReference type="InterPro" id="IPR013785">
    <property type="entry name" value="Aldolase_TIM"/>
</dbReference>
<dbReference type="InterPro" id="IPR035990">
    <property type="entry name" value="TIM_sf"/>
</dbReference>
<dbReference type="InterPro" id="IPR022896">
    <property type="entry name" value="TrioseP_Isoase_bac/euk"/>
</dbReference>
<dbReference type="InterPro" id="IPR000652">
    <property type="entry name" value="Triosephosphate_isomerase"/>
</dbReference>
<dbReference type="InterPro" id="IPR020861">
    <property type="entry name" value="Triosephosphate_isomerase_AS"/>
</dbReference>
<dbReference type="NCBIfam" id="TIGR00419">
    <property type="entry name" value="tim"/>
    <property type="match status" value="1"/>
</dbReference>
<dbReference type="PANTHER" id="PTHR21139">
    <property type="entry name" value="TRIOSEPHOSPHATE ISOMERASE"/>
    <property type="match status" value="1"/>
</dbReference>
<dbReference type="PANTHER" id="PTHR21139:SF2">
    <property type="entry name" value="TRIOSEPHOSPHATE ISOMERASE"/>
    <property type="match status" value="1"/>
</dbReference>
<dbReference type="Pfam" id="PF00121">
    <property type="entry name" value="TIM"/>
    <property type="match status" value="1"/>
</dbReference>
<dbReference type="SUPFAM" id="SSF51351">
    <property type="entry name" value="Triosephosphate isomerase (TIM)"/>
    <property type="match status" value="1"/>
</dbReference>
<dbReference type="PROSITE" id="PS00171">
    <property type="entry name" value="TIM_1"/>
    <property type="match status" value="1"/>
</dbReference>
<dbReference type="PROSITE" id="PS51440">
    <property type="entry name" value="TIM_2"/>
    <property type="match status" value="1"/>
</dbReference>
<evidence type="ECO:0000250" key="1"/>
<evidence type="ECO:0000269" key="2">
    <source>
    </source>
</evidence>
<evidence type="ECO:0000305" key="3"/>
<gene>
    <name type="primary">Tpi</name>
</gene>
<feature type="initiator methionine" description="Removed" evidence="2">
    <location>
        <position position="1"/>
    </location>
</feature>
<feature type="chain" id="PRO_0000090129" description="Triosephosphate isomerase">
    <location>
        <begin position="2"/>
        <end position="247"/>
    </location>
</feature>
<feature type="active site" description="Electrophile" evidence="1">
    <location>
        <position position="94"/>
    </location>
</feature>
<feature type="active site" description="Proton acceptor" evidence="1">
    <location>
        <position position="164"/>
    </location>
</feature>
<feature type="binding site" evidence="1">
    <location>
        <position position="10"/>
    </location>
    <ligand>
        <name>substrate</name>
    </ligand>
</feature>
<feature type="binding site" evidence="1">
    <location>
        <position position="12"/>
    </location>
    <ligand>
        <name>substrate</name>
    </ligand>
</feature>
<accession>P30741</accession>
<keyword id="KW-0903">Direct protein sequencing</keyword>
<keyword id="KW-0312">Gluconeogenesis</keyword>
<keyword id="KW-0324">Glycolysis</keyword>
<keyword id="KW-0413">Isomerase</keyword>
<reference key="1">
    <citation type="journal article" date="1993" name="Nature">
        <title>A novel intron site in the triosephosphate isomerase gene from the mosquito Culex tarsalis.</title>
        <authorList>
            <person name="Tittiger C."/>
            <person name="Whyard S."/>
            <person name="Walker V.K."/>
        </authorList>
    </citation>
    <scope>NUCLEOTIDE SEQUENCE [GENOMIC DNA]</scope>
    <scope>PROTEIN SEQUENCE OF 2-27</scope>
</reference>
<organism>
    <name type="scientific">Culex tarsalis</name>
    <name type="common">Encephalitis mosquito</name>
    <dbReference type="NCBI Taxonomy" id="7177"/>
    <lineage>
        <taxon>Eukaryota</taxon>
        <taxon>Metazoa</taxon>
        <taxon>Ecdysozoa</taxon>
        <taxon>Arthropoda</taxon>
        <taxon>Hexapoda</taxon>
        <taxon>Insecta</taxon>
        <taxon>Pterygota</taxon>
        <taxon>Neoptera</taxon>
        <taxon>Endopterygota</taxon>
        <taxon>Diptera</taxon>
        <taxon>Nematocera</taxon>
        <taxon>Culicoidea</taxon>
        <taxon>Culicidae</taxon>
        <taxon>Culicinae</taxon>
        <taxon>Culicini</taxon>
        <taxon>Culex</taxon>
        <taxon>Culex</taxon>
    </lineage>
</organism>
<sequence length="247" mass="26389">MGRKFCVGGNWKMNGDKASIADLCKVLTTGPLNADTEVVVGCPAPYLTLARSQLPDSVCVAAQNCYKVPKGAFTGEISPAMLKDLNIGWVILGHSERRAIFGESDELIADKVAHALAEGLKVIACIGETLQEREAGQTEAVCFRQTKAIADKVKDWSNVVIAYEPVWAIGTGKTASPEQAQEVHAALRKWFTENVSADVSAAIRIQYGGSVTAANCRELAAKPDIDGFLVGGASLKPEFIQIVNARQ</sequence>
<comment type="catalytic activity">
    <reaction>
        <text>D-glyceraldehyde 3-phosphate = dihydroxyacetone phosphate</text>
        <dbReference type="Rhea" id="RHEA:18585"/>
        <dbReference type="ChEBI" id="CHEBI:57642"/>
        <dbReference type="ChEBI" id="CHEBI:59776"/>
        <dbReference type="EC" id="5.3.1.1"/>
    </reaction>
</comment>
<comment type="pathway">
    <text>Carbohydrate biosynthesis; gluconeogenesis.</text>
</comment>
<comment type="pathway">
    <text>Carbohydrate degradation; glycolysis; D-glyceraldehyde 3-phosphate from glycerone phosphate: step 1/1.</text>
</comment>
<comment type="subunit">
    <text>Homodimer.</text>
</comment>
<comment type="similarity">
    <text evidence="3">Belongs to the triosephosphate isomerase family.</text>
</comment>
<name>TPIS_CULTA</name>